<gene>
    <name evidence="1" type="primary">rplA</name>
    <name type="ordered locus">SAB0489</name>
</gene>
<accession>Q2YSC3</accession>
<reference key="1">
    <citation type="journal article" date="2007" name="PLoS ONE">
        <title>Molecular correlates of host specialization in Staphylococcus aureus.</title>
        <authorList>
            <person name="Herron-Olson L."/>
            <person name="Fitzgerald J.R."/>
            <person name="Musser J.M."/>
            <person name="Kapur V."/>
        </authorList>
    </citation>
    <scope>NUCLEOTIDE SEQUENCE [LARGE SCALE GENOMIC DNA]</scope>
    <source>
        <strain>bovine RF122 / ET3-1</strain>
    </source>
</reference>
<dbReference type="EMBL" id="AJ938182">
    <property type="protein sequence ID" value="CAI80177.1"/>
    <property type="molecule type" value="Genomic_DNA"/>
</dbReference>
<dbReference type="RefSeq" id="WP_001074619.1">
    <property type="nucleotide sequence ID" value="NC_007622.1"/>
</dbReference>
<dbReference type="SMR" id="Q2YSC3"/>
<dbReference type="GeneID" id="98344872"/>
<dbReference type="KEGG" id="sab:SAB0489"/>
<dbReference type="HOGENOM" id="CLU_062853_0_0_9"/>
<dbReference type="GO" id="GO:0015934">
    <property type="term" value="C:large ribosomal subunit"/>
    <property type="evidence" value="ECO:0007669"/>
    <property type="project" value="InterPro"/>
</dbReference>
<dbReference type="GO" id="GO:0019843">
    <property type="term" value="F:rRNA binding"/>
    <property type="evidence" value="ECO:0007669"/>
    <property type="project" value="UniProtKB-UniRule"/>
</dbReference>
<dbReference type="GO" id="GO:0003735">
    <property type="term" value="F:structural constituent of ribosome"/>
    <property type="evidence" value="ECO:0007669"/>
    <property type="project" value="InterPro"/>
</dbReference>
<dbReference type="GO" id="GO:0000049">
    <property type="term" value="F:tRNA binding"/>
    <property type="evidence" value="ECO:0007669"/>
    <property type="project" value="UniProtKB-KW"/>
</dbReference>
<dbReference type="GO" id="GO:0006417">
    <property type="term" value="P:regulation of translation"/>
    <property type="evidence" value="ECO:0007669"/>
    <property type="project" value="UniProtKB-KW"/>
</dbReference>
<dbReference type="GO" id="GO:0006412">
    <property type="term" value="P:translation"/>
    <property type="evidence" value="ECO:0007669"/>
    <property type="project" value="UniProtKB-UniRule"/>
</dbReference>
<dbReference type="CDD" id="cd00403">
    <property type="entry name" value="Ribosomal_L1"/>
    <property type="match status" value="1"/>
</dbReference>
<dbReference type="FunFam" id="3.40.50.790:FF:000001">
    <property type="entry name" value="50S ribosomal protein L1"/>
    <property type="match status" value="1"/>
</dbReference>
<dbReference type="Gene3D" id="3.30.190.20">
    <property type="match status" value="1"/>
</dbReference>
<dbReference type="Gene3D" id="3.40.50.790">
    <property type="match status" value="1"/>
</dbReference>
<dbReference type="HAMAP" id="MF_01318_B">
    <property type="entry name" value="Ribosomal_uL1_B"/>
    <property type="match status" value="1"/>
</dbReference>
<dbReference type="InterPro" id="IPR005878">
    <property type="entry name" value="Ribosom_uL1_bac-type"/>
</dbReference>
<dbReference type="InterPro" id="IPR002143">
    <property type="entry name" value="Ribosomal_uL1"/>
</dbReference>
<dbReference type="InterPro" id="IPR023674">
    <property type="entry name" value="Ribosomal_uL1-like"/>
</dbReference>
<dbReference type="InterPro" id="IPR028364">
    <property type="entry name" value="Ribosomal_uL1/biogenesis"/>
</dbReference>
<dbReference type="InterPro" id="IPR016095">
    <property type="entry name" value="Ribosomal_uL1_3-a/b-sand"/>
</dbReference>
<dbReference type="InterPro" id="IPR023673">
    <property type="entry name" value="Ribosomal_uL1_CS"/>
</dbReference>
<dbReference type="NCBIfam" id="TIGR01169">
    <property type="entry name" value="rplA_bact"/>
    <property type="match status" value="1"/>
</dbReference>
<dbReference type="PANTHER" id="PTHR36427">
    <property type="entry name" value="54S RIBOSOMAL PROTEIN L1, MITOCHONDRIAL"/>
    <property type="match status" value="1"/>
</dbReference>
<dbReference type="PANTHER" id="PTHR36427:SF3">
    <property type="entry name" value="LARGE RIBOSOMAL SUBUNIT PROTEIN UL1M"/>
    <property type="match status" value="1"/>
</dbReference>
<dbReference type="Pfam" id="PF00687">
    <property type="entry name" value="Ribosomal_L1"/>
    <property type="match status" value="1"/>
</dbReference>
<dbReference type="PIRSF" id="PIRSF002155">
    <property type="entry name" value="Ribosomal_L1"/>
    <property type="match status" value="1"/>
</dbReference>
<dbReference type="SUPFAM" id="SSF56808">
    <property type="entry name" value="Ribosomal protein L1"/>
    <property type="match status" value="1"/>
</dbReference>
<dbReference type="PROSITE" id="PS01199">
    <property type="entry name" value="RIBOSOMAL_L1"/>
    <property type="match status" value="1"/>
</dbReference>
<feature type="chain" id="PRO_0000230641" description="Large ribosomal subunit protein uL1">
    <location>
        <begin position="1"/>
        <end position="230"/>
    </location>
</feature>
<organism>
    <name type="scientific">Staphylococcus aureus (strain bovine RF122 / ET3-1)</name>
    <dbReference type="NCBI Taxonomy" id="273036"/>
    <lineage>
        <taxon>Bacteria</taxon>
        <taxon>Bacillati</taxon>
        <taxon>Bacillota</taxon>
        <taxon>Bacilli</taxon>
        <taxon>Bacillales</taxon>
        <taxon>Staphylococcaceae</taxon>
        <taxon>Staphylococcus</taxon>
    </lineage>
</organism>
<keyword id="KW-0678">Repressor</keyword>
<keyword id="KW-0687">Ribonucleoprotein</keyword>
<keyword id="KW-0689">Ribosomal protein</keyword>
<keyword id="KW-0694">RNA-binding</keyword>
<keyword id="KW-0699">rRNA-binding</keyword>
<keyword id="KW-0810">Translation regulation</keyword>
<keyword id="KW-0820">tRNA-binding</keyword>
<sequence>MAKKGKKYQEAASKVDRTQHYSVEEAIKLAKETSIANFDASVEVAFRLGIDTRKNDQQIRGAVVLPNGTGKSQSVLVFAKGDKIAEAEAAGADYVGEAEYVQKIQQGWFDFDVVVATPDMMGEVGKLGRVLGPKGLMPNPKTGTVTMDVKKAVEEIKAGKVEYRAEKAGIVHASIGKVSFTDEQLIENFNTLQDVLAKAKPSSAKGTYFKSVAVTTTMGPGVKIDTASFK</sequence>
<protein>
    <recommendedName>
        <fullName evidence="1">Large ribosomal subunit protein uL1</fullName>
    </recommendedName>
    <alternativeName>
        <fullName evidence="2">50S ribosomal protein L1</fullName>
    </alternativeName>
</protein>
<evidence type="ECO:0000255" key="1">
    <source>
        <dbReference type="HAMAP-Rule" id="MF_01318"/>
    </source>
</evidence>
<evidence type="ECO:0000305" key="2"/>
<proteinExistence type="inferred from homology"/>
<name>RL1_STAAB</name>
<comment type="function">
    <text evidence="1">Binds directly to 23S rRNA. The L1 stalk is quite mobile in the ribosome, and is involved in E site tRNA release.</text>
</comment>
<comment type="function">
    <text evidence="1">Protein L1 is also a translational repressor protein, it controls the translation of the L11 operon by binding to its mRNA.</text>
</comment>
<comment type="subunit">
    <text evidence="1">Part of the 50S ribosomal subunit.</text>
</comment>
<comment type="similarity">
    <text evidence="1">Belongs to the universal ribosomal protein uL1 family.</text>
</comment>